<name>RS4_RICCK</name>
<protein>
    <recommendedName>
        <fullName evidence="1">Small ribosomal subunit protein uS4</fullName>
    </recommendedName>
    <alternativeName>
        <fullName evidence="2">30S ribosomal protein S4</fullName>
    </alternativeName>
</protein>
<reference key="1">
    <citation type="submission" date="2007-09" db="EMBL/GenBank/DDBJ databases">
        <title>Complete genome sequence of Rickettsia canadensis.</title>
        <authorList>
            <person name="Madan A."/>
            <person name="Fahey J."/>
            <person name="Helton E."/>
            <person name="Ketteman M."/>
            <person name="Madan A."/>
            <person name="Rodrigues S."/>
            <person name="Sanchez A."/>
            <person name="Whiting M."/>
            <person name="Dasch G."/>
            <person name="Eremeeva M."/>
        </authorList>
    </citation>
    <scope>NUCLEOTIDE SEQUENCE [LARGE SCALE GENOMIC DNA]</scope>
    <source>
        <strain>McKiel</strain>
    </source>
</reference>
<proteinExistence type="inferred from homology"/>
<gene>
    <name evidence="1" type="primary">rpsD</name>
    <name type="ordered locus">A1E_03760</name>
</gene>
<organism>
    <name type="scientific">Rickettsia canadensis (strain McKiel)</name>
    <dbReference type="NCBI Taxonomy" id="293613"/>
    <lineage>
        <taxon>Bacteria</taxon>
        <taxon>Pseudomonadati</taxon>
        <taxon>Pseudomonadota</taxon>
        <taxon>Alphaproteobacteria</taxon>
        <taxon>Rickettsiales</taxon>
        <taxon>Rickettsiaceae</taxon>
        <taxon>Rickettsieae</taxon>
        <taxon>Rickettsia</taxon>
        <taxon>belli group</taxon>
    </lineage>
</organism>
<feature type="chain" id="PRO_0000322327" description="Small ribosomal subunit protein uS4">
    <location>
        <begin position="1"/>
        <end position="205"/>
    </location>
</feature>
<feature type="domain" description="S4 RNA-binding" evidence="1">
    <location>
        <begin position="94"/>
        <end position="157"/>
    </location>
</feature>
<comment type="function">
    <text evidence="1">One of the primary rRNA binding proteins, it binds directly to 16S rRNA where it nucleates assembly of the body of the 30S subunit.</text>
</comment>
<comment type="function">
    <text evidence="1">With S5 and S12 plays an important role in translational accuracy.</text>
</comment>
<comment type="subunit">
    <text evidence="1">Part of the 30S ribosomal subunit. Contacts protein S5. The interaction surface between S4 and S5 is involved in control of translational fidelity.</text>
</comment>
<comment type="similarity">
    <text evidence="1">Belongs to the universal ribosomal protein uS4 family.</text>
</comment>
<accession>A8EZ98</accession>
<keyword id="KW-0687">Ribonucleoprotein</keyword>
<keyword id="KW-0689">Ribosomal protein</keyword>
<keyword id="KW-0694">RNA-binding</keyword>
<keyword id="KW-0699">rRNA-binding</keyword>
<dbReference type="EMBL" id="CP000409">
    <property type="protein sequence ID" value="ABV73681.1"/>
    <property type="molecule type" value="Genomic_DNA"/>
</dbReference>
<dbReference type="RefSeq" id="WP_012148876.1">
    <property type="nucleotide sequence ID" value="NC_009879.1"/>
</dbReference>
<dbReference type="SMR" id="A8EZ98"/>
<dbReference type="STRING" id="293613.A1E_03760"/>
<dbReference type="KEGG" id="rcm:A1E_03760"/>
<dbReference type="eggNOG" id="COG0522">
    <property type="taxonomic scope" value="Bacteria"/>
</dbReference>
<dbReference type="HOGENOM" id="CLU_092403_0_0_5"/>
<dbReference type="Proteomes" id="UP000007056">
    <property type="component" value="Chromosome"/>
</dbReference>
<dbReference type="GO" id="GO:0015935">
    <property type="term" value="C:small ribosomal subunit"/>
    <property type="evidence" value="ECO:0007669"/>
    <property type="project" value="InterPro"/>
</dbReference>
<dbReference type="GO" id="GO:0019843">
    <property type="term" value="F:rRNA binding"/>
    <property type="evidence" value="ECO:0007669"/>
    <property type="project" value="UniProtKB-UniRule"/>
</dbReference>
<dbReference type="GO" id="GO:0003735">
    <property type="term" value="F:structural constituent of ribosome"/>
    <property type="evidence" value="ECO:0007669"/>
    <property type="project" value="InterPro"/>
</dbReference>
<dbReference type="GO" id="GO:0042274">
    <property type="term" value="P:ribosomal small subunit biogenesis"/>
    <property type="evidence" value="ECO:0007669"/>
    <property type="project" value="TreeGrafter"/>
</dbReference>
<dbReference type="GO" id="GO:0006412">
    <property type="term" value="P:translation"/>
    <property type="evidence" value="ECO:0007669"/>
    <property type="project" value="UniProtKB-UniRule"/>
</dbReference>
<dbReference type="CDD" id="cd00165">
    <property type="entry name" value="S4"/>
    <property type="match status" value="1"/>
</dbReference>
<dbReference type="FunFam" id="3.10.290.10:FF:000001">
    <property type="entry name" value="30S ribosomal protein S4"/>
    <property type="match status" value="1"/>
</dbReference>
<dbReference type="Gene3D" id="1.10.1050.10">
    <property type="entry name" value="Ribosomal Protein S4 Delta 41, Chain A, domain 1"/>
    <property type="match status" value="1"/>
</dbReference>
<dbReference type="Gene3D" id="3.10.290.10">
    <property type="entry name" value="RNA-binding S4 domain"/>
    <property type="match status" value="1"/>
</dbReference>
<dbReference type="HAMAP" id="MF_01306_B">
    <property type="entry name" value="Ribosomal_uS4_B"/>
    <property type="match status" value="1"/>
</dbReference>
<dbReference type="InterPro" id="IPR022801">
    <property type="entry name" value="Ribosomal_uS4"/>
</dbReference>
<dbReference type="InterPro" id="IPR005709">
    <property type="entry name" value="Ribosomal_uS4_bac-type"/>
</dbReference>
<dbReference type="InterPro" id="IPR018079">
    <property type="entry name" value="Ribosomal_uS4_CS"/>
</dbReference>
<dbReference type="InterPro" id="IPR001912">
    <property type="entry name" value="Ribosomal_uS4_N"/>
</dbReference>
<dbReference type="InterPro" id="IPR002942">
    <property type="entry name" value="S4_RNA-bd"/>
</dbReference>
<dbReference type="InterPro" id="IPR036986">
    <property type="entry name" value="S4_RNA-bd_sf"/>
</dbReference>
<dbReference type="NCBIfam" id="NF003717">
    <property type="entry name" value="PRK05327.1"/>
    <property type="match status" value="1"/>
</dbReference>
<dbReference type="NCBIfam" id="TIGR01017">
    <property type="entry name" value="rpsD_bact"/>
    <property type="match status" value="1"/>
</dbReference>
<dbReference type="PANTHER" id="PTHR11831">
    <property type="entry name" value="30S 40S RIBOSOMAL PROTEIN"/>
    <property type="match status" value="1"/>
</dbReference>
<dbReference type="PANTHER" id="PTHR11831:SF4">
    <property type="entry name" value="SMALL RIBOSOMAL SUBUNIT PROTEIN US4M"/>
    <property type="match status" value="1"/>
</dbReference>
<dbReference type="Pfam" id="PF00163">
    <property type="entry name" value="Ribosomal_S4"/>
    <property type="match status" value="1"/>
</dbReference>
<dbReference type="Pfam" id="PF01479">
    <property type="entry name" value="S4"/>
    <property type="match status" value="1"/>
</dbReference>
<dbReference type="SMART" id="SM01390">
    <property type="entry name" value="Ribosomal_S4"/>
    <property type="match status" value="1"/>
</dbReference>
<dbReference type="SMART" id="SM00363">
    <property type="entry name" value="S4"/>
    <property type="match status" value="1"/>
</dbReference>
<dbReference type="SUPFAM" id="SSF55174">
    <property type="entry name" value="Alpha-L RNA-binding motif"/>
    <property type="match status" value="1"/>
</dbReference>
<dbReference type="PROSITE" id="PS00632">
    <property type="entry name" value="RIBOSOMAL_S4"/>
    <property type="match status" value="1"/>
</dbReference>
<dbReference type="PROSITE" id="PS50889">
    <property type="entry name" value="S4"/>
    <property type="match status" value="1"/>
</dbReference>
<sequence length="205" mass="23378">MTKIVRSKYKASRRLGVSLWGDSKDAFNIRNYRPGQHGQNTMIKTSDYGLHLKAKQRLKCHYGRVTEKQFRNIFELAQKMKGNTGENFIGLLESRLDTVVYRMNIAPTIFAARQLVSHGHIKLNGKKADIASIRLKEGDVVEVKESIKQIALIQESILKQGQTTPNYLSFDVPSLTGKYLRVPNLSDVPYPFEAEVHLVIELYSR</sequence>
<evidence type="ECO:0000255" key="1">
    <source>
        <dbReference type="HAMAP-Rule" id="MF_01306"/>
    </source>
</evidence>
<evidence type="ECO:0000305" key="2"/>